<name>IF1A1_HALSA</name>
<reference key="1">
    <citation type="journal article" date="2000" name="Proc. Natl. Acad. Sci. U.S.A.">
        <title>Genome sequence of Halobacterium species NRC-1.</title>
        <authorList>
            <person name="Ng W.V."/>
            <person name="Kennedy S.P."/>
            <person name="Mahairas G.G."/>
            <person name="Berquist B."/>
            <person name="Pan M."/>
            <person name="Shukla H.D."/>
            <person name="Lasky S.R."/>
            <person name="Baliga N.S."/>
            <person name="Thorsson V."/>
            <person name="Sbrogna J."/>
            <person name="Swartzell S."/>
            <person name="Weir D."/>
            <person name="Hall J."/>
            <person name="Dahl T.A."/>
            <person name="Welti R."/>
            <person name="Goo Y.A."/>
            <person name="Leithauser B."/>
            <person name="Keller K."/>
            <person name="Cruz R."/>
            <person name="Danson M.J."/>
            <person name="Hough D.W."/>
            <person name="Maddocks D.G."/>
            <person name="Jablonski P.E."/>
            <person name="Krebs M.P."/>
            <person name="Angevine C.M."/>
            <person name="Dale H."/>
            <person name="Isenbarger T.A."/>
            <person name="Peck R.F."/>
            <person name="Pohlschroder M."/>
            <person name="Spudich J.L."/>
            <person name="Jung K.-H."/>
            <person name="Alam M."/>
            <person name="Freitas T."/>
            <person name="Hou S."/>
            <person name="Daniels C.J."/>
            <person name="Dennis P.P."/>
            <person name="Omer A.D."/>
            <person name="Ebhardt H."/>
            <person name="Lowe T.M."/>
            <person name="Liang P."/>
            <person name="Riley M."/>
            <person name="Hood L."/>
            <person name="DasSarma S."/>
        </authorList>
    </citation>
    <scope>NUCLEOTIDE SEQUENCE [LARGE SCALE GENOMIC DNA]</scope>
    <source>
        <strain>ATCC 700922 / JCM 11081 / NRC-1</strain>
    </source>
</reference>
<keyword id="KW-0396">Initiation factor</keyword>
<keyword id="KW-0648">Protein biosynthesis</keyword>
<keyword id="KW-1185">Reference proteome</keyword>
<evidence type="ECO:0000250" key="1"/>
<evidence type="ECO:0000305" key="2"/>
<feature type="chain" id="PRO_0000145116" description="Translation initiation factor 1A 1">
    <location>
        <begin position="1"/>
        <end position="95"/>
    </location>
</feature>
<feature type="domain" description="S1-like">
    <location>
        <begin position="7"/>
        <end position="81"/>
    </location>
</feature>
<accession>Q9HN64</accession>
<gene>
    <name type="primary">eIF1A1</name>
    <name type="ordered locus">VNG_2234G</name>
</gene>
<dbReference type="EMBL" id="AE004437">
    <property type="protein sequence ID" value="AAG20357.1"/>
    <property type="molecule type" value="Genomic_DNA"/>
</dbReference>
<dbReference type="PIR" id="A84374">
    <property type="entry name" value="A84374"/>
</dbReference>
<dbReference type="SMR" id="Q9HN64"/>
<dbReference type="FunCoup" id="Q9HN64">
    <property type="interactions" value="110"/>
</dbReference>
<dbReference type="STRING" id="64091.VNG_2234G"/>
<dbReference type="PaxDb" id="64091-VNG_2234G"/>
<dbReference type="KEGG" id="hal:VNG_2234G"/>
<dbReference type="PATRIC" id="fig|64091.14.peg.1717"/>
<dbReference type="HOGENOM" id="CLU_109098_1_2_2"/>
<dbReference type="InParanoid" id="Q9HN64"/>
<dbReference type="OrthoDB" id="2586at2157"/>
<dbReference type="PhylomeDB" id="Q9HN64"/>
<dbReference type="Proteomes" id="UP000000554">
    <property type="component" value="Chromosome"/>
</dbReference>
<dbReference type="GO" id="GO:0005737">
    <property type="term" value="C:cytoplasm"/>
    <property type="evidence" value="ECO:0000318"/>
    <property type="project" value="GO_Central"/>
</dbReference>
<dbReference type="GO" id="GO:0003723">
    <property type="term" value="F:RNA binding"/>
    <property type="evidence" value="ECO:0007669"/>
    <property type="project" value="InterPro"/>
</dbReference>
<dbReference type="GO" id="GO:0003743">
    <property type="term" value="F:translation initiation factor activity"/>
    <property type="evidence" value="ECO:0000318"/>
    <property type="project" value="GO_Central"/>
</dbReference>
<dbReference type="GO" id="GO:0006413">
    <property type="term" value="P:translational initiation"/>
    <property type="evidence" value="ECO:0000318"/>
    <property type="project" value="GO_Central"/>
</dbReference>
<dbReference type="CDD" id="cd05793">
    <property type="entry name" value="S1_IF1A"/>
    <property type="match status" value="1"/>
</dbReference>
<dbReference type="Gene3D" id="2.40.50.140">
    <property type="entry name" value="Nucleic acid-binding proteins"/>
    <property type="match status" value="1"/>
</dbReference>
<dbReference type="HAMAP" id="MF_00216">
    <property type="entry name" value="aIF_1A"/>
    <property type="match status" value="1"/>
</dbReference>
<dbReference type="InterPro" id="IPR012340">
    <property type="entry name" value="NA-bd_OB-fold"/>
</dbReference>
<dbReference type="InterPro" id="IPR006196">
    <property type="entry name" value="RNA-binding_domain_S1_IF1"/>
</dbReference>
<dbReference type="InterPro" id="IPR001253">
    <property type="entry name" value="TIF_eIF-1A"/>
</dbReference>
<dbReference type="InterPro" id="IPR018104">
    <property type="entry name" value="TIF_eIF-1A_CS"/>
</dbReference>
<dbReference type="NCBIfam" id="TIGR00523">
    <property type="entry name" value="eIF-1A"/>
    <property type="match status" value="1"/>
</dbReference>
<dbReference type="NCBIfam" id="NF003082">
    <property type="entry name" value="PRK04012.1-1"/>
    <property type="match status" value="1"/>
</dbReference>
<dbReference type="NCBIfam" id="NF003083">
    <property type="entry name" value="PRK04012.1-2"/>
    <property type="match status" value="1"/>
</dbReference>
<dbReference type="NCBIfam" id="NF003084">
    <property type="entry name" value="PRK04012.1-3"/>
    <property type="match status" value="1"/>
</dbReference>
<dbReference type="NCBIfam" id="NF003085">
    <property type="entry name" value="PRK04012.1-5"/>
    <property type="match status" value="1"/>
</dbReference>
<dbReference type="PANTHER" id="PTHR21668">
    <property type="entry name" value="EIF-1A"/>
    <property type="match status" value="1"/>
</dbReference>
<dbReference type="Pfam" id="PF01176">
    <property type="entry name" value="eIF-1a"/>
    <property type="match status" value="1"/>
</dbReference>
<dbReference type="SMART" id="SM00652">
    <property type="entry name" value="eIF1a"/>
    <property type="match status" value="1"/>
</dbReference>
<dbReference type="SUPFAM" id="SSF50249">
    <property type="entry name" value="Nucleic acid-binding proteins"/>
    <property type="match status" value="1"/>
</dbReference>
<dbReference type="PROSITE" id="PS01262">
    <property type="entry name" value="IF1A"/>
    <property type="match status" value="1"/>
</dbReference>
<dbReference type="PROSITE" id="PS50832">
    <property type="entry name" value="S1_IF1_TYPE"/>
    <property type="match status" value="1"/>
</dbReference>
<sequence length="95" mass="11148">MSDDGGGRKNLRMPEDDEVFAEVTDMLGANRVQVRCADGEERTARIPGRMQKRIWIREDDIVLVEPWDWQDDKADVTWRYEKSDADQLREEGHIE</sequence>
<comment type="function">
    <text evidence="1">Seems to be required for maximal rate of protein biosynthesis. Enhances ribosome dissociation into subunits and stabilizes the binding of the initiator Met-tRNA(I) to 40 S ribosomal subunits (By similarity).</text>
</comment>
<comment type="similarity">
    <text evidence="2">Belongs to the eIF-1A family.</text>
</comment>
<proteinExistence type="inferred from homology"/>
<protein>
    <recommendedName>
        <fullName>Translation initiation factor 1A 1</fullName>
        <shortName>aIF-1A 1</shortName>
    </recommendedName>
</protein>
<organism>
    <name type="scientific">Halobacterium salinarum (strain ATCC 700922 / JCM 11081 / NRC-1)</name>
    <name type="common">Halobacterium halobium</name>
    <dbReference type="NCBI Taxonomy" id="64091"/>
    <lineage>
        <taxon>Archaea</taxon>
        <taxon>Methanobacteriati</taxon>
        <taxon>Methanobacteriota</taxon>
        <taxon>Stenosarchaea group</taxon>
        <taxon>Halobacteria</taxon>
        <taxon>Halobacteriales</taxon>
        <taxon>Halobacteriaceae</taxon>
        <taxon>Halobacterium</taxon>
        <taxon>Halobacterium salinarum NRC-34001</taxon>
    </lineage>
</organism>